<gene>
    <name type="primary">ubl4ab</name>
</gene>
<dbReference type="EMBL" id="BT073633">
    <property type="protein sequence ID" value="ACO08057.1"/>
    <property type="molecule type" value="mRNA"/>
</dbReference>
<dbReference type="EMBL" id="BT074116">
    <property type="protein sequence ID" value="ACO08540.1"/>
    <property type="molecule type" value="mRNA"/>
</dbReference>
<dbReference type="SMR" id="C1BHN7"/>
<dbReference type="Proteomes" id="UP000694395">
    <property type="component" value="Unplaced"/>
</dbReference>
<dbReference type="GO" id="GO:0071818">
    <property type="term" value="C:BAT3 complex"/>
    <property type="evidence" value="ECO:0000250"/>
    <property type="project" value="UniProtKB"/>
</dbReference>
<dbReference type="GO" id="GO:0005829">
    <property type="term" value="C:cytosol"/>
    <property type="evidence" value="ECO:0000250"/>
    <property type="project" value="UniProtKB"/>
</dbReference>
<dbReference type="GO" id="GO:0051087">
    <property type="term" value="F:protein-folding chaperone binding"/>
    <property type="evidence" value="ECO:0007669"/>
    <property type="project" value="TreeGrafter"/>
</dbReference>
<dbReference type="GO" id="GO:0006620">
    <property type="term" value="P:post-translational protein targeting to endoplasmic reticulum membrane"/>
    <property type="evidence" value="ECO:0007669"/>
    <property type="project" value="InterPro"/>
</dbReference>
<dbReference type="GO" id="GO:0071816">
    <property type="term" value="P:tail-anchored membrane protein insertion into ER membrane"/>
    <property type="evidence" value="ECO:0000250"/>
    <property type="project" value="UniProtKB"/>
</dbReference>
<dbReference type="CDD" id="cd01807">
    <property type="entry name" value="Ubl_UBL4A_like"/>
    <property type="match status" value="1"/>
</dbReference>
<dbReference type="FunFam" id="3.10.20.90:FF:000144">
    <property type="entry name" value="Ubiquitin-like protein 4A"/>
    <property type="match status" value="1"/>
</dbReference>
<dbReference type="Gene3D" id="3.10.20.90">
    <property type="entry name" value="Phosphatidylinositol 3-kinase Catalytic Subunit, Chain A, domain 1"/>
    <property type="match status" value="1"/>
</dbReference>
<dbReference type="InterPro" id="IPR000626">
    <property type="entry name" value="Ubiquitin-like_dom"/>
</dbReference>
<dbReference type="InterPro" id="IPR029071">
    <property type="entry name" value="Ubiquitin-like_domsf"/>
</dbReference>
<dbReference type="InterPro" id="IPR019954">
    <property type="entry name" value="Ubiquitin_CS"/>
</dbReference>
<dbReference type="InterPro" id="IPR019956">
    <property type="entry name" value="Ubiquitin_dom"/>
</dbReference>
<dbReference type="InterPro" id="IPR041421">
    <property type="entry name" value="Ubl4_C_TUGS"/>
</dbReference>
<dbReference type="InterPro" id="IPR047154">
    <property type="entry name" value="UBL4A-like"/>
</dbReference>
<dbReference type="InterPro" id="IPR044724">
    <property type="entry name" value="Ubl_UBL4A-like"/>
</dbReference>
<dbReference type="PANTHER" id="PTHR46555">
    <property type="entry name" value="UBIQUITIN-LIKE PROTEIN 4A"/>
    <property type="match status" value="1"/>
</dbReference>
<dbReference type="PANTHER" id="PTHR46555:SF1">
    <property type="entry name" value="UBIQUITIN-LIKE PROTEIN 4A"/>
    <property type="match status" value="1"/>
</dbReference>
<dbReference type="Pfam" id="PF17840">
    <property type="entry name" value="Tugs"/>
    <property type="match status" value="1"/>
</dbReference>
<dbReference type="Pfam" id="PF00240">
    <property type="entry name" value="ubiquitin"/>
    <property type="match status" value="1"/>
</dbReference>
<dbReference type="PRINTS" id="PR00348">
    <property type="entry name" value="UBIQUITIN"/>
</dbReference>
<dbReference type="SMART" id="SM00213">
    <property type="entry name" value="UBQ"/>
    <property type="match status" value="1"/>
</dbReference>
<dbReference type="SUPFAM" id="SSF54236">
    <property type="entry name" value="Ubiquitin-like"/>
    <property type="match status" value="1"/>
</dbReference>
<dbReference type="PROSITE" id="PS00299">
    <property type="entry name" value="UBIQUITIN_1"/>
    <property type="match status" value="1"/>
</dbReference>
<dbReference type="PROSITE" id="PS50053">
    <property type="entry name" value="UBIQUITIN_2"/>
    <property type="match status" value="1"/>
</dbReference>
<sequence length="151" mass="16789">MILTIKPLKGKECNVQVTEDEKVSMVKELVSERLNIPANQQRLLYKGKALADEYRLSDYSIGPEAKLNLVVRPAGERSGMASSSSAVSGVWQTLSTVLAKHFSPADAAKVHEQLIKDYERSLRQLSLDDIERLAGRLLHPDSEGMDTSYMD</sequence>
<comment type="function">
    <text evidence="1">Component of the BAT3 complex, a multiprotein complex involved in the post-translational delivery of tail-anchored (TA) membrane proteins to the endoplasmic reticulum membrane. TA membrane proteins, also named type II transmembrane proteins, contain a single C-terminal transmembrane region (By similarity).</text>
</comment>
<comment type="subunit">
    <text evidence="1">Component of the BAT3 complex.</text>
</comment>
<comment type="subcellular location">
    <subcellularLocation>
        <location evidence="1">Cytoplasm</location>
        <location evidence="1">Cytosol</location>
    </subcellularLocation>
</comment>
<evidence type="ECO:0000250" key="1"/>
<evidence type="ECO:0000255" key="2">
    <source>
        <dbReference type="PROSITE-ProRule" id="PRU00214"/>
    </source>
</evidence>
<evidence type="ECO:0000305" key="3"/>
<name>UB4AB_ONCMY</name>
<proteinExistence type="evidence at transcript level"/>
<protein>
    <recommendedName>
        <fullName>Ubiquitin-like protein 4A-B</fullName>
    </recommendedName>
</protein>
<accession>C1BHN7</accession>
<accession>C1BGA4</accession>
<feature type="chain" id="PRO_0000403745" description="Ubiquitin-like protein 4A-B">
    <location>
        <begin position="1"/>
        <end position="151"/>
    </location>
</feature>
<feature type="domain" description="Ubiquitin-like" evidence="2">
    <location>
        <begin position="1"/>
        <end position="76"/>
    </location>
</feature>
<feature type="sequence conflict" description="In Ref. 1; ACO08057." evidence="3" ref="1">
    <original>Y</original>
    <variation>H</variation>
    <location>
        <position position="54"/>
    </location>
</feature>
<feature type="sequence conflict" description="In Ref. 1; ACO08057." evidence="3" ref="1">
    <original>E</original>
    <variation>K</variation>
    <location>
        <position position="64"/>
    </location>
</feature>
<feature type="sequence conflict" description="In Ref. 1; ACO08057." evidence="3" ref="1">
    <original>E</original>
    <variation>G</variation>
    <location>
        <position position="76"/>
    </location>
</feature>
<keyword id="KW-0963">Cytoplasm</keyword>
<keyword id="KW-0813">Transport</keyword>
<organism>
    <name type="scientific">Oncorhynchus mykiss</name>
    <name type="common">Rainbow trout</name>
    <name type="synonym">Salmo gairdneri</name>
    <dbReference type="NCBI Taxonomy" id="8022"/>
    <lineage>
        <taxon>Eukaryota</taxon>
        <taxon>Metazoa</taxon>
        <taxon>Chordata</taxon>
        <taxon>Craniata</taxon>
        <taxon>Vertebrata</taxon>
        <taxon>Euteleostomi</taxon>
        <taxon>Actinopterygii</taxon>
        <taxon>Neopterygii</taxon>
        <taxon>Teleostei</taxon>
        <taxon>Protacanthopterygii</taxon>
        <taxon>Salmoniformes</taxon>
        <taxon>Salmonidae</taxon>
        <taxon>Salmoninae</taxon>
        <taxon>Oncorhynchus</taxon>
    </lineage>
</organism>
<reference key="1">
    <citation type="submission" date="2009-03" db="EMBL/GenBank/DDBJ databases">
        <title>Oncorhynchus mykiss ESTs and full-length cDNAs from White Blood Cells.</title>
        <authorList>
            <person name="Yasuike M."/>
            <person name="von Schalburg K."/>
            <person name="Cooper G."/>
            <person name="Leong J."/>
            <person name="Davidson W.S."/>
            <person name="Koop B.F."/>
        </authorList>
    </citation>
    <scope>NUCLEOTIDE SEQUENCE [LARGE SCALE MRNA]</scope>
    <source>
        <tissue>Erythrocyte</tissue>
        <tissue>Leukocyte</tissue>
    </source>
</reference>